<keyword id="KW-0687">Ribonucleoprotein</keyword>
<keyword id="KW-0689">Ribosomal protein</keyword>
<keyword id="KW-0694">RNA-binding</keyword>
<keyword id="KW-0699">rRNA-binding</keyword>
<organism>
    <name type="scientific">Chlamydia trachomatis serovar A (strain ATCC VR-571B / DSM 19440 / HAR-13)</name>
    <dbReference type="NCBI Taxonomy" id="315277"/>
    <lineage>
        <taxon>Bacteria</taxon>
        <taxon>Pseudomonadati</taxon>
        <taxon>Chlamydiota</taxon>
        <taxon>Chlamydiia</taxon>
        <taxon>Chlamydiales</taxon>
        <taxon>Chlamydiaceae</taxon>
        <taxon>Chlamydia/Chlamydophila group</taxon>
        <taxon>Chlamydia</taxon>
    </lineage>
</organism>
<protein>
    <recommendedName>
        <fullName evidence="1">Large ribosomal subunit protein uL3</fullName>
    </recommendedName>
    <alternativeName>
        <fullName evidence="2">50S ribosomal protein L3</fullName>
    </alternativeName>
</protein>
<accession>Q3KLG9</accession>
<proteinExistence type="inferred from homology"/>
<sequence length="221" mass="23514">MRSQLSLIGKKEGMMHVFDKNGNLVACSVISVDANVVAQLKTASSDGYNAVQMGADVVQAPEKTIEKRFSKALLGHFKKSGGRVCRVLKEVVVSEEAVQSVSLGDEFGLEIFDGVSNVDICGISKGKGFQGVMKKFGFRGGPKSHGSGFHRHAGSTGMRSTPGRCFPGSKRPSHMGCDRVTVKNLEVVKVDLDRKVMLVKGAIPGFKGSVVVVKRSCGVEG</sequence>
<evidence type="ECO:0000255" key="1">
    <source>
        <dbReference type="HAMAP-Rule" id="MF_01325"/>
    </source>
</evidence>
<evidence type="ECO:0000305" key="2"/>
<feature type="chain" id="PRO_0000241331" description="Large ribosomal subunit protein uL3">
    <location>
        <begin position="1"/>
        <end position="221"/>
    </location>
</feature>
<name>RL3_CHLTA</name>
<dbReference type="EMBL" id="CP000051">
    <property type="protein sequence ID" value="AAX50803.1"/>
    <property type="molecule type" value="Genomic_DNA"/>
</dbReference>
<dbReference type="RefSeq" id="WP_009871892.1">
    <property type="nucleotide sequence ID" value="NC_007429.1"/>
</dbReference>
<dbReference type="SMR" id="Q3KLG9"/>
<dbReference type="KEGG" id="cta:CTA_0577"/>
<dbReference type="HOGENOM" id="CLU_044142_4_1_0"/>
<dbReference type="Proteomes" id="UP000002532">
    <property type="component" value="Chromosome"/>
</dbReference>
<dbReference type="GO" id="GO:0022625">
    <property type="term" value="C:cytosolic large ribosomal subunit"/>
    <property type="evidence" value="ECO:0007669"/>
    <property type="project" value="TreeGrafter"/>
</dbReference>
<dbReference type="GO" id="GO:0019843">
    <property type="term" value="F:rRNA binding"/>
    <property type="evidence" value="ECO:0007669"/>
    <property type="project" value="UniProtKB-UniRule"/>
</dbReference>
<dbReference type="GO" id="GO:0003735">
    <property type="term" value="F:structural constituent of ribosome"/>
    <property type="evidence" value="ECO:0007669"/>
    <property type="project" value="InterPro"/>
</dbReference>
<dbReference type="GO" id="GO:0006412">
    <property type="term" value="P:translation"/>
    <property type="evidence" value="ECO:0007669"/>
    <property type="project" value="UniProtKB-UniRule"/>
</dbReference>
<dbReference type="FunFam" id="2.40.30.10:FF:000004">
    <property type="entry name" value="50S ribosomal protein L3"/>
    <property type="match status" value="1"/>
</dbReference>
<dbReference type="Gene3D" id="3.30.160.810">
    <property type="match status" value="1"/>
</dbReference>
<dbReference type="Gene3D" id="2.40.30.10">
    <property type="entry name" value="Translation factors"/>
    <property type="match status" value="1"/>
</dbReference>
<dbReference type="HAMAP" id="MF_01325_B">
    <property type="entry name" value="Ribosomal_uL3_B"/>
    <property type="match status" value="1"/>
</dbReference>
<dbReference type="InterPro" id="IPR000597">
    <property type="entry name" value="Ribosomal_uL3"/>
</dbReference>
<dbReference type="InterPro" id="IPR019927">
    <property type="entry name" value="Ribosomal_uL3_bac/org-type"/>
</dbReference>
<dbReference type="InterPro" id="IPR009000">
    <property type="entry name" value="Transl_B-barrel_sf"/>
</dbReference>
<dbReference type="NCBIfam" id="TIGR03625">
    <property type="entry name" value="L3_bact"/>
    <property type="match status" value="1"/>
</dbReference>
<dbReference type="PANTHER" id="PTHR11229">
    <property type="entry name" value="50S RIBOSOMAL PROTEIN L3"/>
    <property type="match status" value="1"/>
</dbReference>
<dbReference type="PANTHER" id="PTHR11229:SF16">
    <property type="entry name" value="LARGE RIBOSOMAL SUBUNIT PROTEIN UL3C"/>
    <property type="match status" value="1"/>
</dbReference>
<dbReference type="Pfam" id="PF00297">
    <property type="entry name" value="Ribosomal_L3"/>
    <property type="match status" value="1"/>
</dbReference>
<dbReference type="SUPFAM" id="SSF50447">
    <property type="entry name" value="Translation proteins"/>
    <property type="match status" value="1"/>
</dbReference>
<comment type="function">
    <text evidence="1">One of the primary rRNA binding proteins, it binds directly near the 3'-end of the 23S rRNA, where it nucleates assembly of the 50S subunit.</text>
</comment>
<comment type="subunit">
    <text evidence="1">Part of the 50S ribosomal subunit. Forms a cluster with proteins L14 and L19.</text>
</comment>
<comment type="similarity">
    <text evidence="1">Belongs to the universal ribosomal protein uL3 family.</text>
</comment>
<reference key="1">
    <citation type="journal article" date="2005" name="Infect. Immun.">
        <title>Comparative genomic analysis of Chlamydia trachomatis oculotropic and genitotropic strains.</title>
        <authorList>
            <person name="Carlson J.H."/>
            <person name="Porcella S.F."/>
            <person name="McClarty G."/>
            <person name="Caldwell H.D."/>
        </authorList>
    </citation>
    <scope>NUCLEOTIDE SEQUENCE [LARGE SCALE GENOMIC DNA]</scope>
    <source>
        <strain>ATCC VR-571B / DSM 19440 / HAR-13</strain>
    </source>
</reference>
<gene>
    <name evidence="1" type="primary">rplC</name>
    <name type="ordered locus">CTA_0577</name>
</gene>